<dbReference type="EMBL" id="AM295250">
    <property type="protein sequence ID" value="CAL29374.1"/>
    <property type="molecule type" value="Genomic_DNA"/>
</dbReference>
<dbReference type="RefSeq" id="WP_015901709.1">
    <property type="nucleotide sequence ID" value="NC_012121.1"/>
</dbReference>
<dbReference type="SMR" id="B9DPX1"/>
<dbReference type="GeneID" id="93794913"/>
<dbReference type="KEGG" id="sca:SCA_2471"/>
<dbReference type="eggNOG" id="COG1195">
    <property type="taxonomic scope" value="Bacteria"/>
</dbReference>
<dbReference type="HOGENOM" id="CLU_040267_0_1_9"/>
<dbReference type="OrthoDB" id="9803889at2"/>
<dbReference type="BioCyc" id="SCAR396513:SCA_RS12415-MONOMER"/>
<dbReference type="Proteomes" id="UP000000444">
    <property type="component" value="Chromosome"/>
</dbReference>
<dbReference type="GO" id="GO:0005737">
    <property type="term" value="C:cytoplasm"/>
    <property type="evidence" value="ECO:0007669"/>
    <property type="project" value="UniProtKB-SubCell"/>
</dbReference>
<dbReference type="GO" id="GO:0005524">
    <property type="term" value="F:ATP binding"/>
    <property type="evidence" value="ECO:0007669"/>
    <property type="project" value="UniProtKB-UniRule"/>
</dbReference>
<dbReference type="GO" id="GO:0003697">
    <property type="term" value="F:single-stranded DNA binding"/>
    <property type="evidence" value="ECO:0007669"/>
    <property type="project" value="UniProtKB-UniRule"/>
</dbReference>
<dbReference type="GO" id="GO:0006260">
    <property type="term" value="P:DNA replication"/>
    <property type="evidence" value="ECO:0007669"/>
    <property type="project" value="UniProtKB-UniRule"/>
</dbReference>
<dbReference type="GO" id="GO:0000731">
    <property type="term" value="P:DNA synthesis involved in DNA repair"/>
    <property type="evidence" value="ECO:0007669"/>
    <property type="project" value="TreeGrafter"/>
</dbReference>
<dbReference type="GO" id="GO:0006302">
    <property type="term" value="P:double-strand break repair"/>
    <property type="evidence" value="ECO:0007669"/>
    <property type="project" value="TreeGrafter"/>
</dbReference>
<dbReference type="GO" id="GO:0009432">
    <property type="term" value="P:SOS response"/>
    <property type="evidence" value="ECO:0007669"/>
    <property type="project" value="UniProtKB-UniRule"/>
</dbReference>
<dbReference type="CDD" id="cd03242">
    <property type="entry name" value="ABC_RecF"/>
    <property type="match status" value="1"/>
</dbReference>
<dbReference type="FunFam" id="1.20.1050.90:FF:000002">
    <property type="entry name" value="DNA replication and repair protein RecF"/>
    <property type="match status" value="1"/>
</dbReference>
<dbReference type="Gene3D" id="3.40.50.300">
    <property type="entry name" value="P-loop containing nucleotide triphosphate hydrolases"/>
    <property type="match status" value="1"/>
</dbReference>
<dbReference type="Gene3D" id="1.20.1050.90">
    <property type="entry name" value="RecF/RecN/SMC, N-terminal domain"/>
    <property type="match status" value="1"/>
</dbReference>
<dbReference type="HAMAP" id="MF_00365">
    <property type="entry name" value="RecF"/>
    <property type="match status" value="1"/>
</dbReference>
<dbReference type="InterPro" id="IPR001238">
    <property type="entry name" value="DNA-binding_RecF"/>
</dbReference>
<dbReference type="InterPro" id="IPR018078">
    <property type="entry name" value="DNA-binding_RecF_CS"/>
</dbReference>
<dbReference type="InterPro" id="IPR027417">
    <property type="entry name" value="P-loop_NTPase"/>
</dbReference>
<dbReference type="InterPro" id="IPR003395">
    <property type="entry name" value="RecF/RecN/SMC_N"/>
</dbReference>
<dbReference type="InterPro" id="IPR042174">
    <property type="entry name" value="RecF_2"/>
</dbReference>
<dbReference type="NCBIfam" id="TIGR00611">
    <property type="entry name" value="recf"/>
    <property type="match status" value="1"/>
</dbReference>
<dbReference type="PANTHER" id="PTHR32182">
    <property type="entry name" value="DNA REPLICATION AND REPAIR PROTEIN RECF"/>
    <property type="match status" value="1"/>
</dbReference>
<dbReference type="PANTHER" id="PTHR32182:SF0">
    <property type="entry name" value="DNA REPLICATION AND REPAIR PROTEIN RECF"/>
    <property type="match status" value="1"/>
</dbReference>
<dbReference type="Pfam" id="PF02463">
    <property type="entry name" value="SMC_N"/>
    <property type="match status" value="1"/>
</dbReference>
<dbReference type="SUPFAM" id="SSF52540">
    <property type="entry name" value="P-loop containing nucleoside triphosphate hydrolases"/>
    <property type="match status" value="1"/>
</dbReference>
<dbReference type="PROSITE" id="PS00617">
    <property type="entry name" value="RECF_1"/>
    <property type="match status" value="1"/>
</dbReference>
<dbReference type="PROSITE" id="PS00618">
    <property type="entry name" value="RECF_2"/>
    <property type="match status" value="1"/>
</dbReference>
<evidence type="ECO:0000255" key="1">
    <source>
        <dbReference type="HAMAP-Rule" id="MF_00365"/>
    </source>
</evidence>
<protein>
    <recommendedName>
        <fullName evidence="1">DNA replication and repair protein RecF</fullName>
    </recommendedName>
</protein>
<gene>
    <name evidence="1" type="primary">recF</name>
    <name type="ordered locus">Sca_2471</name>
</gene>
<comment type="function">
    <text evidence="1">The RecF protein is involved in DNA metabolism; it is required for DNA replication and normal SOS inducibility. RecF binds preferentially to single-stranded, linear DNA. It also seems to bind ATP.</text>
</comment>
<comment type="subcellular location">
    <subcellularLocation>
        <location evidence="1">Cytoplasm</location>
    </subcellularLocation>
</comment>
<comment type="similarity">
    <text evidence="1">Belongs to the RecF family.</text>
</comment>
<name>RECF_STACT</name>
<reference key="1">
    <citation type="journal article" date="2009" name="Appl. Environ. Microbiol.">
        <title>Genome analysis of the meat starter culture bacterium Staphylococcus carnosus TM300.</title>
        <authorList>
            <person name="Rosenstein R."/>
            <person name="Nerz C."/>
            <person name="Biswas L."/>
            <person name="Resch A."/>
            <person name="Raddatz G."/>
            <person name="Schuster S.C."/>
            <person name="Goetz F."/>
        </authorList>
    </citation>
    <scope>NUCLEOTIDE SEQUENCE [LARGE SCALE GENOMIC DNA]</scope>
    <source>
        <strain>TM300</strain>
    </source>
</reference>
<accession>B9DPX1</accession>
<keyword id="KW-0067">ATP-binding</keyword>
<keyword id="KW-0963">Cytoplasm</keyword>
<keyword id="KW-0227">DNA damage</keyword>
<keyword id="KW-0234">DNA repair</keyword>
<keyword id="KW-0235">DNA replication</keyword>
<keyword id="KW-0238">DNA-binding</keyword>
<keyword id="KW-0547">Nucleotide-binding</keyword>
<keyword id="KW-1185">Reference proteome</keyword>
<keyword id="KW-0742">SOS response</keyword>
<organism>
    <name type="scientific">Staphylococcus carnosus (strain TM300)</name>
    <dbReference type="NCBI Taxonomy" id="396513"/>
    <lineage>
        <taxon>Bacteria</taxon>
        <taxon>Bacillati</taxon>
        <taxon>Bacillota</taxon>
        <taxon>Bacilli</taxon>
        <taxon>Bacillales</taxon>
        <taxon>Staphylococcaceae</taxon>
        <taxon>Staphylococcus</taxon>
    </lineage>
</organism>
<feature type="chain" id="PRO_1000133699" description="DNA replication and repair protein RecF">
    <location>
        <begin position="1"/>
        <end position="370"/>
    </location>
</feature>
<feature type="binding site" evidence="1">
    <location>
        <begin position="30"/>
        <end position="37"/>
    </location>
    <ligand>
        <name>ATP</name>
        <dbReference type="ChEBI" id="CHEBI:30616"/>
    </ligand>
</feature>
<proteinExistence type="inferred from homology"/>
<sequence length="370" mass="42899">MKLNALQLENYRNYEEVVLDCHPDVNILIGENAQGKTNLLESIYTLALAKSHRTSNDKELIRFNAEYAKIEGELSYRHGKMPLTMFITKKGKKVKVNHLEQHRLTQYVGHLNVVLFAPEDLNIVKGSPQVRRRFIDMELGQISAVYLNDLSQYQRILKQKNNYLKQLQMKQKTDRTMLEVLNQQFAEYALKITLKRVHFINELETLAKPIHSSITDERETLDLEYRPSLKLSEETDEAKLYEEVQKLLQDNMEREIERGVALYGPHRDDLGFKVNEMDAQTYGSQGQQRTTALSIKLAEIELINIEVGEYPILLLDDVLSELDDSRQTHLLSTIQDKVQTFVTTTSVEGIDHEIMKHAKLYRINQGEIIK</sequence>